<reference key="1">
    <citation type="journal article" date="2003" name="Nature">
        <title>The genome sequence of Bacillus anthracis Ames and comparison to closely related bacteria.</title>
        <authorList>
            <person name="Read T.D."/>
            <person name="Peterson S.N."/>
            <person name="Tourasse N.J."/>
            <person name="Baillie L.W."/>
            <person name="Paulsen I.T."/>
            <person name="Nelson K.E."/>
            <person name="Tettelin H."/>
            <person name="Fouts D.E."/>
            <person name="Eisen J.A."/>
            <person name="Gill S.R."/>
            <person name="Holtzapple E.K."/>
            <person name="Okstad O.A."/>
            <person name="Helgason E."/>
            <person name="Rilstone J."/>
            <person name="Wu M."/>
            <person name="Kolonay J.F."/>
            <person name="Beanan M.J."/>
            <person name="Dodson R.J."/>
            <person name="Brinkac L.M."/>
            <person name="Gwinn M.L."/>
            <person name="DeBoy R.T."/>
            <person name="Madpu R."/>
            <person name="Daugherty S.C."/>
            <person name="Durkin A.S."/>
            <person name="Haft D.H."/>
            <person name="Nelson W.C."/>
            <person name="Peterson J.D."/>
            <person name="Pop M."/>
            <person name="Khouri H.M."/>
            <person name="Radune D."/>
            <person name="Benton J.L."/>
            <person name="Mahamoud Y."/>
            <person name="Jiang L."/>
            <person name="Hance I.R."/>
            <person name="Weidman J.F."/>
            <person name="Berry K.J."/>
            <person name="Plaut R.D."/>
            <person name="Wolf A.M."/>
            <person name="Watkins K.L."/>
            <person name="Nierman W.C."/>
            <person name="Hazen A."/>
            <person name="Cline R.T."/>
            <person name="Redmond C."/>
            <person name="Thwaite J.E."/>
            <person name="White O."/>
            <person name="Salzberg S.L."/>
            <person name="Thomason B."/>
            <person name="Friedlander A.M."/>
            <person name="Koehler T.M."/>
            <person name="Hanna P.C."/>
            <person name="Kolstoe A.-B."/>
            <person name="Fraser C.M."/>
        </authorList>
    </citation>
    <scope>NUCLEOTIDE SEQUENCE [LARGE SCALE GENOMIC DNA]</scope>
    <source>
        <strain>Ames / isolate Porton</strain>
    </source>
</reference>
<reference key="2">
    <citation type="submission" date="2004-01" db="EMBL/GenBank/DDBJ databases">
        <title>Complete genome sequence of Bacillus anthracis Sterne.</title>
        <authorList>
            <person name="Brettin T.S."/>
            <person name="Bruce D."/>
            <person name="Challacombe J.F."/>
            <person name="Gilna P."/>
            <person name="Han C."/>
            <person name="Hill K."/>
            <person name="Hitchcock P."/>
            <person name="Jackson P."/>
            <person name="Keim P."/>
            <person name="Longmire J."/>
            <person name="Lucas S."/>
            <person name="Okinaka R."/>
            <person name="Richardson P."/>
            <person name="Rubin E."/>
            <person name="Tice H."/>
        </authorList>
    </citation>
    <scope>NUCLEOTIDE SEQUENCE [LARGE SCALE GENOMIC DNA]</scope>
    <source>
        <strain>Sterne</strain>
    </source>
</reference>
<reference key="3">
    <citation type="journal article" date="2009" name="J. Bacteriol.">
        <title>The complete genome sequence of Bacillus anthracis Ames 'Ancestor'.</title>
        <authorList>
            <person name="Ravel J."/>
            <person name="Jiang L."/>
            <person name="Stanley S.T."/>
            <person name="Wilson M.R."/>
            <person name="Decker R.S."/>
            <person name="Read T.D."/>
            <person name="Worsham P."/>
            <person name="Keim P.S."/>
            <person name="Salzberg S.L."/>
            <person name="Fraser-Liggett C.M."/>
            <person name="Rasko D.A."/>
        </authorList>
    </citation>
    <scope>NUCLEOTIDE SEQUENCE [LARGE SCALE GENOMIC DNA]</scope>
    <source>
        <strain>Ames ancestor</strain>
    </source>
</reference>
<gene>
    <name evidence="1" type="primary">dltA</name>
    <name type="ordered locus">BA_1389</name>
    <name type="ordered locus">GBAA_1389</name>
    <name type="ordered locus">BAS1287</name>
</gene>
<accession>Q81T97</accession>
<accession>Q6I1H4</accession>
<accession>Q6KVC5</accession>
<feature type="chain" id="PRO_1000025524" description="D-alanine--D-alanyl carrier protein ligase">
    <location>
        <begin position="1"/>
        <end position="503"/>
    </location>
</feature>
<feature type="binding site" evidence="1">
    <location>
        <begin position="151"/>
        <end position="152"/>
    </location>
    <ligand>
        <name>ATP</name>
        <dbReference type="ChEBI" id="CHEBI:30616"/>
    </ligand>
</feature>
<feature type="binding site" evidence="1">
    <location>
        <position position="196"/>
    </location>
    <ligand>
        <name>D-alanine</name>
        <dbReference type="ChEBI" id="CHEBI:57416"/>
    </ligand>
</feature>
<feature type="binding site" evidence="1">
    <location>
        <begin position="291"/>
        <end position="296"/>
    </location>
    <ligand>
        <name>ATP</name>
        <dbReference type="ChEBI" id="CHEBI:30616"/>
    </ligand>
</feature>
<feature type="binding site" evidence="1">
    <location>
        <position position="300"/>
    </location>
    <ligand>
        <name>D-alanine</name>
        <dbReference type="ChEBI" id="CHEBI:57416"/>
    </ligand>
</feature>
<feature type="binding site" evidence="1">
    <location>
        <position position="382"/>
    </location>
    <ligand>
        <name>ATP</name>
        <dbReference type="ChEBI" id="CHEBI:30616"/>
    </ligand>
</feature>
<feature type="binding site" evidence="1">
    <location>
        <begin position="393"/>
        <end position="396"/>
    </location>
    <ligand>
        <name>ATP</name>
        <dbReference type="ChEBI" id="CHEBI:30616"/>
    </ligand>
</feature>
<feature type="binding site" evidence="1">
    <location>
        <position position="491"/>
    </location>
    <ligand>
        <name>ATP</name>
        <dbReference type="ChEBI" id="CHEBI:30616"/>
    </ligand>
</feature>
<feature type="binding site" evidence="1">
    <location>
        <position position="491"/>
    </location>
    <ligand>
        <name>D-alanine</name>
        <dbReference type="ChEBI" id="CHEBI:57416"/>
    </ligand>
</feature>
<name>DLTA_BACAN</name>
<evidence type="ECO:0000255" key="1">
    <source>
        <dbReference type="HAMAP-Rule" id="MF_00593"/>
    </source>
</evidence>
<organism>
    <name type="scientific">Bacillus anthracis</name>
    <dbReference type="NCBI Taxonomy" id="1392"/>
    <lineage>
        <taxon>Bacteria</taxon>
        <taxon>Bacillati</taxon>
        <taxon>Bacillota</taxon>
        <taxon>Bacilli</taxon>
        <taxon>Bacillales</taxon>
        <taxon>Bacillaceae</taxon>
        <taxon>Bacillus</taxon>
        <taxon>Bacillus cereus group</taxon>
    </lineage>
</organism>
<proteinExistence type="inferred from homology"/>
<keyword id="KW-0067">ATP-binding</keyword>
<keyword id="KW-0963">Cytoplasm</keyword>
<keyword id="KW-0436">Ligase</keyword>
<keyword id="KW-0547">Nucleotide-binding</keyword>
<keyword id="KW-1185">Reference proteome</keyword>
<comment type="function">
    <text evidence="1">Catalyzes the first step in the D-alanylation of lipoteichoic acid (LTA), the activation of D-alanine and its transfer onto the D-alanyl carrier protein (Dcp) DltC. In an ATP-dependent two-step reaction, forms a high energy D-alanyl-AMP intermediate, followed by transfer of the D-alanyl residue as a thiol ester to the phosphopantheinyl prosthetic group of the Dcp. D-alanylation of LTA plays an important role in modulating the properties of the cell wall in Gram-positive bacteria, influencing the net charge of the cell wall.</text>
</comment>
<comment type="catalytic activity">
    <reaction evidence="1">
        <text>holo-[D-alanyl-carrier protein] + D-alanine + ATP = D-alanyl-[D-alanyl-carrier protein] + AMP + diphosphate</text>
        <dbReference type="Rhea" id="RHEA:55132"/>
        <dbReference type="Rhea" id="RHEA-COMP:14102"/>
        <dbReference type="Rhea" id="RHEA-COMP:14103"/>
        <dbReference type="ChEBI" id="CHEBI:30616"/>
        <dbReference type="ChEBI" id="CHEBI:33019"/>
        <dbReference type="ChEBI" id="CHEBI:57416"/>
        <dbReference type="ChEBI" id="CHEBI:64479"/>
        <dbReference type="ChEBI" id="CHEBI:138620"/>
        <dbReference type="ChEBI" id="CHEBI:456215"/>
        <dbReference type="EC" id="6.2.1.54"/>
    </reaction>
</comment>
<comment type="pathway">
    <text evidence="1">Cell wall biogenesis; lipoteichoic acid biosynthesis.</text>
</comment>
<comment type="subcellular location">
    <subcellularLocation>
        <location evidence="1">Cytoplasm</location>
    </subcellularLocation>
</comment>
<comment type="similarity">
    <text evidence="1">Belongs to the ATP-dependent AMP-binding enzyme family. DltA subfamily.</text>
</comment>
<dbReference type="EC" id="6.2.1.54" evidence="1"/>
<dbReference type="EMBL" id="AE016879">
    <property type="protein sequence ID" value="AAP25333.1"/>
    <property type="molecule type" value="Genomic_DNA"/>
</dbReference>
<dbReference type="EMBL" id="AE017334">
    <property type="protein sequence ID" value="AAT30486.1"/>
    <property type="molecule type" value="Genomic_DNA"/>
</dbReference>
<dbReference type="EMBL" id="AE017225">
    <property type="protein sequence ID" value="AAT53607.1"/>
    <property type="molecule type" value="Genomic_DNA"/>
</dbReference>
<dbReference type="RefSeq" id="NP_843847.1">
    <property type="nucleotide sequence ID" value="NC_003997.3"/>
</dbReference>
<dbReference type="RefSeq" id="WP_000770521.1">
    <property type="nucleotide sequence ID" value="NZ_WXXJ01000001.1"/>
</dbReference>
<dbReference type="RefSeq" id="YP_027556.1">
    <property type="nucleotide sequence ID" value="NC_005945.1"/>
</dbReference>
<dbReference type="SMR" id="Q81T97"/>
<dbReference type="STRING" id="261594.GBAA_1389"/>
<dbReference type="DNASU" id="1084139"/>
<dbReference type="GeneID" id="45021373"/>
<dbReference type="KEGG" id="ban:BA_1389"/>
<dbReference type="KEGG" id="banh:HYU01_07055"/>
<dbReference type="KEGG" id="bar:GBAA_1389"/>
<dbReference type="KEGG" id="bat:BAS1287"/>
<dbReference type="PATRIC" id="fig|198094.11.peg.1364"/>
<dbReference type="eggNOG" id="COG1020">
    <property type="taxonomic scope" value="Bacteria"/>
</dbReference>
<dbReference type="HOGENOM" id="CLU_000022_2_12_9"/>
<dbReference type="OMA" id="VMDLYPC"/>
<dbReference type="OrthoDB" id="9765680at2"/>
<dbReference type="UniPathway" id="UPA00556"/>
<dbReference type="Proteomes" id="UP000000427">
    <property type="component" value="Chromosome"/>
</dbReference>
<dbReference type="Proteomes" id="UP000000594">
    <property type="component" value="Chromosome"/>
</dbReference>
<dbReference type="GO" id="GO:0005737">
    <property type="term" value="C:cytoplasm"/>
    <property type="evidence" value="ECO:0007669"/>
    <property type="project" value="UniProtKB-SubCell"/>
</dbReference>
<dbReference type="GO" id="GO:0005524">
    <property type="term" value="F:ATP binding"/>
    <property type="evidence" value="ECO:0007669"/>
    <property type="project" value="UniProtKB-KW"/>
</dbReference>
<dbReference type="GO" id="GO:0047473">
    <property type="term" value="F:D-alanine [D-alanyl carrier protein] ligase activity"/>
    <property type="evidence" value="ECO:0007669"/>
    <property type="project" value="UniProtKB-UniRule"/>
</dbReference>
<dbReference type="GO" id="GO:0070395">
    <property type="term" value="P:lipoteichoic acid biosynthetic process"/>
    <property type="evidence" value="ECO:0007669"/>
    <property type="project" value="UniProtKB-UniRule"/>
</dbReference>
<dbReference type="CDD" id="cd05945">
    <property type="entry name" value="DltA"/>
    <property type="match status" value="1"/>
</dbReference>
<dbReference type="FunFam" id="3.30.300.30:FF:000012">
    <property type="entry name" value="D-alanine--D-alanyl carrier protein ligase"/>
    <property type="match status" value="1"/>
</dbReference>
<dbReference type="FunFam" id="3.40.50.12780:FF:000015">
    <property type="entry name" value="D-alanine--D-alanyl carrier protein ligase"/>
    <property type="match status" value="1"/>
</dbReference>
<dbReference type="Gene3D" id="3.30.300.30">
    <property type="match status" value="1"/>
</dbReference>
<dbReference type="Gene3D" id="3.40.50.12780">
    <property type="entry name" value="N-terminal domain of ligase-like"/>
    <property type="match status" value="1"/>
</dbReference>
<dbReference type="HAMAP" id="MF_00593">
    <property type="entry name" value="DltA"/>
    <property type="match status" value="1"/>
</dbReference>
<dbReference type="InterPro" id="IPR010071">
    <property type="entry name" value="AA_adenyl_dom"/>
</dbReference>
<dbReference type="InterPro" id="IPR025110">
    <property type="entry name" value="AMP-bd_C"/>
</dbReference>
<dbReference type="InterPro" id="IPR045851">
    <property type="entry name" value="AMP-bd_C_sf"/>
</dbReference>
<dbReference type="InterPro" id="IPR020845">
    <property type="entry name" value="AMP-binding_CS"/>
</dbReference>
<dbReference type="InterPro" id="IPR000873">
    <property type="entry name" value="AMP-dep_synth/lig_dom"/>
</dbReference>
<dbReference type="InterPro" id="IPR042099">
    <property type="entry name" value="ANL_N_sf"/>
</dbReference>
<dbReference type="InterPro" id="IPR010072">
    <property type="entry name" value="DltA"/>
</dbReference>
<dbReference type="InterPro" id="IPR044507">
    <property type="entry name" value="DltA-like"/>
</dbReference>
<dbReference type="NCBIfam" id="TIGR01733">
    <property type="entry name" value="AA-adenyl-dom"/>
    <property type="match status" value="1"/>
</dbReference>
<dbReference type="NCBIfam" id="TIGR01734">
    <property type="entry name" value="D-ala-DACP-lig"/>
    <property type="match status" value="1"/>
</dbReference>
<dbReference type="NCBIfam" id="NF003417">
    <property type="entry name" value="PRK04813.1"/>
    <property type="match status" value="1"/>
</dbReference>
<dbReference type="PANTHER" id="PTHR45398">
    <property type="match status" value="1"/>
</dbReference>
<dbReference type="PANTHER" id="PTHR45398:SF1">
    <property type="entry name" value="ENZYME, PUTATIVE (JCVI)-RELATED"/>
    <property type="match status" value="1"/>
</dbReference>
<dbReference type="Pfam" id="PF00501">
    <property type="entry name" value="AMP-binding"/>
    <property type="match status" value="1"/>
</dbReference>
<dbReference type="Pfam" id="PF13193">
    <property type="entry name" value="AMP-binding_C"/>
    <property type="match status" value="1"/>
</dbReference>
<dbReference type="SUPFAM" id="SSF56801">
    <property type="entry name" value="Acetyl-CoA synthetase-like"/>
    <property type="match status" value="1"/>
</dbReference>
<dbReference type="PROSITE" id="PS00455">
    <property type="entry name" value="AMP_BINDING"/>
    <property type="match status" value="1"/>
</dbReference>
<sequence>MKLLEQIEKWAIETPDQTAFVWRDAKITYKQLKEDSDALAHWISSEYPDDRSPIMVYGHMQPEMIINFLGCVKAGHAYIPVDLSIPADRVQRIAENSGAKLLLSAAVTVTDLPVRIVSEDNLKDIFFTHKGNTPNPEHAVKGDENFYIIYTSGSTGNPKGVQITYNCLVSFTQWAVEDFNLQTGQVFLNQAPFSFDLSVMDIYPSLVTGGTLWAIDKDMIARPKDLFASLEQSDIQVWTSTPSFAEMCLMEASFSESMLPNMKTFLFCGEVLPNEVARKLIERFPKATIMNTYGPTEATVAVTGIHVTEEVLDQYKSLPVGYCKSDCRLLIMKEDGTIAPDGEKGEIVIVGPSVSVGYLGSPELTEKAFTMIDGERAYKTGDAGYVENGLLFYNGRLDFQIKLHGYRMELEEIEHHLRACSYVEGAVIVPIKKGEKYDYLLAVVVPGEHSFEKEFKLTSAIKKELNERLPNYMIPRKFMYQSSIPMTPNGKVDRKKLLSEVTA</sequence>
<protein>
    <recommendedName>
        <fullName evidence="1">D-alanine--D-alanyl carrier protein ligase</fullName>
        <shortName evidence="1">DCL</shortName>
        <ecNumber evidence="1">6.2.1.54</ecNumber>
    </recommendedName>
    <alternativeName>
        <fullName evidence="1">D-alanine--poly(phosphoribitol) ligase subunit 1</fullName>
    </alternativeName>
    <alternativeName>
        <fullName evidence="1">D-alanine-activating enzyme</fullName>
        <shortName evidence="1">DAE</shortName>
    </alternativeName>
</protein>